<sequence length="188" mass="21214">MKISANSIRTGNILVYNNDLWVVSKTPEHTQPGKGGAYVQVEMKNLKTGTKRNDRFSSSDYLEKAELEQKDCQFLYFEGNNLVLMDTKHFDQINVPKEILEAKLPFLTENMIVKVEFYNDKPLTIVLPPTVILAISETDPVIKGATVTSSYKPAILENGIKVKVPQYLAIGEKIVVKTDDMTYVERAK</sequence>
<gene>
    <name type="primary">efp</name>
    <name type="ordered locus">RP238</name>
</gene>
<protein>
    <recommendedName>
        <fullName>Elongation factor P</fullName>
        <shortName>EF-P</shortName>
    </recommendedName>
</protein>
<feature type="chain" id="PRO_0000094320" description="Elongation factor P">
    <location>
        <begin position="1"/>
        <end position="188"/>
    </location>
</feature>
<keyword id="KW-0963">Cytoplasm</keyword>
<keyword id="KW-0251">Elongation factor</keyword>
<keyword id="KW-0648">Protein biosynthesis</keyword>
<keyword id="KW-1185">Reference proteome</keyword>
<evidence type="ECO:0000250" key="1"/>
<evidence type="ECO:0000305" key="2"/>
<accession>Q9ZDT7</accession>
<comment type="function">
    <text evidence="1">Involved in peptide bond synthesis. Stimulates efficient translation and peptide-bond synthesis on native or reconstituted 70S ribosomes in vitro. Probably functions indirectly by altering the affinity of the ribosome for aminoacyl-tRNA, thus increasing their reactivity as acceptors for peptidyl transferase (By similarity).</text>
</comment>
<comment type="pathway">
    <text>Protein biosynthesis; polypeptide chain elongation.</text>
</comment>
<comment type="subcellular location">
    <subcellularLocation>
        <location evidence="1">Cytoplasm</location>
    </subcellularLocation>
</comment>
<comment type="similarity">
    <text evidence="2">Belongs to the elongation factor P family.</text>
</comment>
<reference key="1">
    <citation type="journal article" date="1998" name="Nature">
        <title>The genome sequence of Rickettsia prowazekii and the origin of mitochondria.</title>
        <authorList>
            <person name="Andersson S.G.E."/>
            <person name="Zomorodipour A."/>
            <person name="Andersson J.O."/>
            <person name="Sicheritz-Ponten T."/>
            <person name="Alsmark U.C.M."/>
            <person name="Podowski R.M."/>
            <person name="Naeslund A.K."/>
            <person name="Eriksson A.-S."/>
            <person name="Winkler H.H."/>
            <person name="Kurland C.G."/>
        </authorList>
    </citation>
    <scope>NUCLEOTIDE SEQUENCE [LARGE SCALE GENOMIC DNA]</scope>
    <source>
        <strain>Madrid E</strain>
    </source>
</reference>
<dbReference type="EMBL" id="AJ235271">
    <property type="protein sequence ID" value="CAA14700.1"/>
    <property type="molecule type" value="Genomic_DNA"/>
</dbReference>
<dbReference type="PIR" id="B71678">
    <property type="entry name" value="B71678"/>
</dbReference>
<dbReference type="RefSeq" id="NP_220623.1">
    <property type="nucleotide sequence ID" value="NC_000963.1"/>
</dbReference>
<dbReference type="RefSeq" id="WP_004596051.1">
    <property type="nucleotide sequence ID" value="NC_000963.1"/>
</dbReference>
<dbReference type="SMR" id="Q9ZDT7"/>
<dbReference type="STRING" id="272947.gene:17555319"/>
<dbReference type="EnsemblBacteria" id="CAA14700">
    <property type="protein sequence ID" value="CAA14700"/>
    <property type="gene ID" value="CAA14700"/>
</dbReference>
<dbReference type="GeneID" id="57569366"/>
<dbReference type="KEGG" id="rpr:RP238"/>
<dbReference type="PATRIC" id="fig|272947.5.peg.245"/>
<dbReference type="eggNOG" id="COG0231">
    <property type="taxonomic scope" value="Bacteria"/>
</dbReference>
<dbReference type="HOGENOM" id="CLU_074944_1_1_5"/>
<dbReference type="OrthoDB" id="9801844at2"/>
<dbReference type="UniPathway" id="UPA00345"/>
<dbReference type="Proteomes" id="UP000002480">
    <property type="component" value="Chromosome"/>
</dbReference>
<dbReference type="GO" id="GO:0005737">
    <property type="term" value="C:cytoplasm"/>
    <property type="evidence" value="ECO:0007669"/>
    <property type="project" value="UniProtKB-SubCell"/>
</dbReference>
<dbReference type="GO" id="GO:0003746">
    <property type="term" value="F:translation elongation factor activity"/>
    <property type="evidence" value="ECO:0007669"/>
    <property type="project" value="UniProtKB-UniRule"/>
</dbReference>
<dbReference type="GO" id="GO:0043043">
    <property type="term" value="P:peptide biosynthetic process"/>
    <property type="evidence" value="ECO:0007669"/>
    <property type="project" value="InterPro"/>
</dbReference>
<dbReference type="CDD" id="cd04470">
    <property type="entry name" value="S1_EF-P_repeat_1"/>
    <property type="match status" value="1"/>
</dbReference>
<dbReference type="FunFam" id="2.40.50.140:FF:000004">
    <property type="entry name" value="Elongation factor P"/>
    <property type="match status" value="1"/>
</dbReference>
<dbReference type="FunFam" id="2.40.50.140:FF:000009">
    <property type="entry name" value="Elongation factor P"/>
    <property type="match status" value="1"/>
</dbReference>
<dbReference type="Gene3D" id="2.30.30.30">
    <property type="match status" value="1"/>
</dbReference>
<dbReference type="Gene3D" id="2.40.50.140">
    <property type="entry name" value="Nucleic acid-binding proteins"/>
    <property type="match status" value="2"/>
</dbReference>
<dbReference type="HAMAP" id="MF_00141">
    <property type="entry name" value="EF_P"/>
    <property type="match status" value="1"/>
</dbReference>
<dbReference type="InterPro" id="IPR015365">
    <property type="entry name" value="Elong-fact-P_C"/>
</dbReference>
<dbReference type="InterPro" id="IPR012340">
    <property type="entry name" value="NA-bd_OB-fold"/>
</dbReference>
<dbReference type="InterPro" id="IPR014722">
    <property type="entry name" value="Rib_uL2_dom2"/>
</dbReference>
<dbReference type="InterPro" id="IPR020599">
    <property type="entry name" value="Transl_elong_fac_P/YeiP"/>
</dbReference>
<dbReference type="InterPro" id="IPR013185">
    <property type="entry name" value="Transl_elong_KOW-like"/>
</dbReference>
<dbReference type="InterPro" id="IPR001059">
    <property type="entry name" value="Transl_elong_P/YeiP_cen"/>
</dbReference>
<dbReference type="InterPro" id="IPR013852">
    <property type="entry name" value="Transl_elong_P/YeiP_CS"/>
</dbReference>
<dbReference type="InterPro" id="IPR011768">
    <property type="entry name" value="Transl_elongation_fac_P"/>
</dbReference>
<dbReference type="InterPro" id="IPR008991">
    <property type="entry name" value="Translation_prot_SH3-like_sf"/>
</dbReference>
<dbReference type="NCBIfam" id="TIGR00038">
    <property type="entry name" value="efp"/>
    <property type="match status" value="1"/>
</dbReference>
<dbReference type="NCBIfam" id="NF001810">
    <property type="entry name" value="PRK00529.1"/>
    <property type="match status" value="1"/>
</dbReference>
<dbReference type="PANTHER" id="PTHR30053">
    <property type="entry name" value="ELONGATION FACTOR P"/>
    <property type="match status" value="1"/>
</dbReference>
<dbReference type="PANTHER" id="PTHR30053:SF14">
    <property type="entry name" value="TRANSLATION ELONGATION FACTOR KOW-LIKE DOMAIN-CONTAINING PROTEIN"/>
    <property type="match status" value="1"/>
</dbReference>
<dbReference type="Pfam" id="PF01132">
    <property type="entry name" value="EFP"/>
    <property type="match status" value="1"/>
</dbReference>
<dbReference type="Pfam" id="PF08207">
    <property type="entry name" value="EFP_N"/>
    <property type="match status" value="1"/>
</dbReference>
<dbReference type="Pfam" id="PF09285">
    <property type="entry name" value="Elong-fact-P_C"/>
    <property type="match status" value="1"/>
</dbReference>
<dbReference type="PIRSF" id="PIRSF005901">
    <property type="entry name" value="EF-P"/>
    <property type="match status" value="1"/>
</dbReference>
<dbReference type="SMART" id="SM01185">
    <property type="entry name" value="EFP"/>
    <property type="match status" value="1"/>
</dbReference>
<dbReference type="SMART" id="SM00841">
    <property type="entry name" value="Elong-fact-P_C"/>
    <property type="match status" value="1"/>
</dbReference>
<dbReference type="SUPFAM" id="SSF50249">
    <property type="entry name" value="Nucleic acid-binding proteins"/>
    <property type="match status" value="2"/>
</dbReference>
<dbReference type="SUPFAM" id="SSF50104">
    <property type="entry name" value="Translation proteins SH3-like domain"/>
    <property type="match status" value="1"/>
</dbReference>
<dbReference type="PROSITE" id="PS01275">
    <property type="entry name" value="EFP"/>
    <property type="match status" value="1"/>
</dbReference>
<proteinExistence type="inferred from homology"/>
<organism>
    <name type="scientific">Rickettsia prowazekii (strain Madrid E)</name>
    <dbReference type="NCBI Taxonomy" id="272947"/>
    <lineage>
        <taxon>Bacteria</taxon>
        <taxon>Pseudomonadati</taxon>
        <taxon>Pseudomonadota</taxon>
        <taxon>Alphaproteobacteria</taxon>
        <taxon>Rickettsiales</taxon>
        <taxon>Rickettsiaceae</taxon>
        <taxon>Rickettsieae</taxon>
        <taxon>Rickettsia</taxon>
        <taxon>typhus group</taxon>
    </lineage>
</organism>
<name>EFP_RICPR</name>